<reference key="1">
    <citation type="journal article" date="1999" name="Nature">
        <title>Evidence for lateral gene transfer between Archaea and Bacteria from genome sequence of Thermotoga maritima.</title>
        <authorList>
            <person name="Nelson K.E."/>
            <person name="Clayton R.A."/>
            <person name="Gill S.R."/>
            <person name="Gwinn M.L."/>
            <person name="Dodson R.J."/>
            <person name="Haft D.H."/>
            <person name="Hickey E.K."/>
            <person name="Peterson J.D."/>
            <person name="Nelson W.C."/>
            <person name="Ketchum K.A."/>
            <person name="McDonald L.A."/>
            <person name="Utterback T.R."/>
            <person name="Malek J.A."/>
            <person name="Linher K.D."/>
            <person name="Garrett M.M."/>
            <person name="Stewart A.M."/>
            <person name="Cotton M.D."/>
            <person name="Pratt M.S."/>
            <person name="Phillips C.A."/>
            <person name="Richardson D.L."/>
            <person name="Heidelberg J.F."/>
            <person name="Sutton G.G."/>
            <person name="Fleischmann R.D."/>
            <person name="Eisen J.A."/>
            <person name="White O."/>
            <person name="Salzberg S.L."/>
            <person name="Smith H.O."/>
            <person name="Venter J.C."/>
            <person name="Fraser C.M."/>
        </authorList>
    </citation>
    <scope>NUCLEOTIDE SEQUENCE [LARGE SCALE GENOMIC DNA]</scope>
    <source>
        <strain>ATCC 43589 / DSM 3109 / JCM 10099 / NBRC 100826 / MSB8</strain>
    </source>
</reference>
<name>SYGA_THEMA</name>
<protein>
    <recommendedName>
        <fullName>Glycine--tRNA ligase alpha subunit</fullName>
        <ecNumber>6.1.1.14</ecNumber>
    </recommendedName>
    <alternativeName>
        <fullName>Glycyl-tRNA synthetase alpha subunit</fullName>
        <shortName>GlyRS</shortName>
    </alternativeName>
</protein>
<evidence type="ECO:0000250" key="1"/>
<evidence type="ECO:0000305" key="2"/>
<evidence type="ECO:0007829" key="3">
    <source>
        <dbReference type="PDB" id="1J5W"/>
    </source>
</evidence>
<accession>Q9WY59</accession>
<comment type="catalytic activity">
    <reaction>
        <text>tRNA(Gly) + glycine + ATP = glycyl-tRNA(Gly) + AMP + diphosphate</text>
        <dbReference type="Rhea" id="RHEA:16013"/>
        <dbReference type="Rhea" id="RHEA-COMP:9664"/>
        <dbReference type="Rhea" id="RHEA-COMP:9683"/>
        <dbReference type="ChEBI" id="CHEBI:30616"/>
        <dbReference type="ChEBI" id="CHEBI:33019"/>
        <dbReference type="ChEBI" id="CHEBI:57305"/>
        <dbReference type="ChEBI" id="CHEBI:78442"/>
        <dbReference type="ChEBI" id="CHEBI:78522"/>
        <dbReference type="ChEBI" id="CHEBI:456215"/>
        <dbReference type="EC" id="6.1.1.14"/>
    </reaction>
</comment>
<comment type="subunit">
    <text evidence="1">Tetramer of two alpha and two beta subunits.</text>
</comment>
<comment type="subcellular location">
    <subcellularLocation>
        <location evidence="1">Cytoplasm</location>
    </subcellularLocation>
</comment>
<comment type="similarity">
    <text evidence="2">Belongs to the class-II aminoacyl-tRNA synthetase family.</text>
</comment>
<sequence>MYLQDVIMKLNDFWASKGCLLEQPYDMEVGAGTFHPATFFGSLRKGPWKVAYVQPSRRPTDGRYGENPNRLQRYFQYQVIIKPSPENSQELYLESLEYLGINLKEHDIRFVEDNWESPTLGAWGVGWEVWLDGMEITQFTYFQQIGGISLKDIPLEITYGLERIAMYLQGVDNVYEVQWNENVKYGDVFLENEREFSVFNFEEANVGLLFRHFDEYEKEFYRLVEKNLYLPAYDYILKCSHTFNLLDARGAISVSQRQTYVKRIQAMARKAARVFLEVQANENSPA</sequence>
<proteinExistence type="evidence at protein level"/>
<feature type="chain" id="PRO_0000072877" description="Glycine--tRNA ligase alpha subunit">
    <location>
        <begin position="1"/>
        <end position="286"/>
    </location>
</feature>
<feature type="helix" evidence="3">
    <location>
        <begin position="3"/>
        <end position="16"/>
    </location>
</feature>
<feature type="helix" evidence="3">
    <location>
        <begin position="32"/>
        <end position="34"/>
    </location>
</feature>
<feature type="helix" evidence="3">
    <location>
        <begin position="36"/>
        <end position="39"/>
    </location>
</feature>
<feature type="helix" evidence="3">
    <location>
        <begin position="41"/>
        <end position="43"/>
    </location>
</feature>
<feature type="strand" evidence="3">
    <location>
        <begin position="48"/>
        <end position="57"/>
    </location>
</feature>
<feature type="strand" evidence="3">
    <location>
        <begin position="72"/>
        <end position="83"/>
    </location>
</feature>
<feature type="helix" evidence="3">
    <location>
        <begin position="88"/>
        <end position="98"/>
    </location>
</feature>
<feature type="turn" evidence="3">
    <location>
        <begin position="103"/>
        <end position="105"/>
    </location>
</feature>
<feature type="strand" evidence="3">
    <location>
        <begin position="108"/>
        <end position="113"/>
    </location>
</feature>
<feature type="helix" evidence="3">
    <location>
        <begin position="118"/>
        <end position="120"/>
    </location>
</feature>
<feature type="strand" evidence="3">
    <location>
        <begin position="122"/>
        <end position="131"/>
    </location>
</feature>
<feature type="strand" evidence="3">
    <location>
        <begin position="134"/>
        <end position="145"/>
    </location>
</feature>
<feature type="strand" evidence="3">
    <location>
        <begin position="155"/>
        <end position="160"/>
    </location>
</feature>
<feature type="helix" evidence="3">
    <location>
        <begin position="161"/>
        <end position="169"/>
    </location>
</feature>
<feature type="helix" evidence="3">
    <location>
        <begin position="174"/>
        <end position="176"/>
    </location>
</feature>
<feature type="strand" evidence="3">
    <location>
        <begin position="178"/>
        <end position="180"/>
    </location>
</feature>
<feature type="helix" evidence="3">
    <location>
        <begin position="185"/>
        <end position="201"/>
    </location>
</feature>
<feature type="helix" evidence="3">
    <location>
        <begin position="206"/>
        <end position="225"/>
    </location>
</feature>
<feature type="helix" evidence="3">
    <location>
        <begin position="229"/>
        <end position="248"/>
    </location>
</feature>
<feature type="helix" evidence="3">
    <location>
        <begin position="254"/>
        <end position="279"/>
    </location>
</feature>
<keyword id="KW-0002">3D-structure</keyword>
<keyword id="KW-0030">Aminoacyl-tRNA synthetase</keyword>
<keyword id="KW-0067">ATP-binding</keyword>
<keyword id="KW-0963">Cytoplasm</keyword>
<keyword id="KW-0436">Ligase</keyword>
<keyword id="KW-0547">Nucleotide-binding</keyword>
<keyword id="KW-0648">Protein biosynthesis</keyword>
<keyword id="KW-1185">Reference proteome</keyword>
<dbReference type="EC" id="6.1.1.14"/>
<dbReference type="EMBL" id="AE000512">
    <property type="protein sequence ID" value="AAD35308.1"/>
    <property type="molecule type" value="Genomic_DNA"/>
</dbReference>
<dbReference type="PIR" id="B72404">
    <property type="entry name" value="B72404"/>
</dbReference>
<dbReference type="RefSeq" id="NP_228031.1">
    <property type="nucleotide sequence ID" value="NC_000853.1"/>
</dbReference>
<dbReference type="RefSeq" id="WP_004082894.1">
    <property type="nucleotide sequence ID" value="NC_000853.1"/>
</dbReference>
<dbReference type="PDB" id="1J5W">
    <property type="method" value="X-ray"/>
    <property type="resolution" value="1.95 A"/>
    <property type="chains" value="A/B=1-286"/>
</dbReference>
<dbReference type="PDBsum" id="1J5W"/>
<dbReference type="SMR" id="Q9WY59"/>
<dbReference type="FunCoup" id="Q9WY59">
    <property type="interactions" value="201"/>
</dbReference>
<dbReference type="STRING" id="243274.TM_0216"/>
<dbReference type="PaxDb" id="243274-THEMA_03645"/>
<dbReference type="EnsemblBacteria" id="AAD35308">
    <property type="protein sequence ID" value="AAD35308"/>
    <property type="gene ID" value="TM_0216"/>
</dbReference>
<dbReference type="KEGG" id="tma:TM0216"/>
<dbReference type="KEGG" id="tmi:THEMA_03645"/>
<dbReference type="KEGG" id="tmm:Tmari_0214"/>
<dbReference type="KEGG" id="tmw:THMA_0223"/>
<dbReference type="eggNOG" id="COG0752">
    <property type="taxonomic scope" value="Bacteria"/>
</dbReference>
<dbReference type="InParanoid" id="Q9WY59"/>
<dbReference type="OrthoDB" id="9802183at2"/>
<dbReference type="EvolutionaryTrace" id="Q9WY59"/>
<dbReference type="Proteomes" id="UP000008183">
    <property type="component" value="Chromosome"/>
</dbReference>
<dbReference type="GO" id="GO:0005737">
    <property type="term" value="C:cytoplasm"/>
    <property type="evidence" value="ECO:0007669"/>
    <property type="project" value="UniProtKB-SubCell"/>
</dbReference>
<dbReference type="GO" id="GO:0005524">
    <property type="term" value="F:ATP binding"/>
    <property type="evidence" value="ECO:0007669"/>
    <property type="project" value="UniProtKB-UniRule"/>
</dbReference>
<dbReference type="GO" id="GO:0004820">
    <property type="term" value="F:glycine-tRNA ligase activity"/>
    <property type="evidence" value="ECO:0007669"/>
    <property type="project" value="UniProtKB-UniRule"/>
</dbReference>
<dbReference type="GO" id="GO:0006426">
    <property type="term" value="P:glycyl-tRNA aminoacylation"/>
    <property type="evidence" value="ECO:0007669"/>
    <property type="project" value="UniProtKB-UniRule"/>
</dbReference>
<dbReference type="CDD" id="cd00733">
    <property type="entry name" value="GlyRS_alpha_core"/>
    <property type="match status" value="1"/>
</dbReference>
<dbReference type="FunFam" id="3.30.930.10:FF:000006">
    <property type="entry name" value="Glycine--tRNA ligase alpha subunit"/>
    <property type="match status" value="1"/>
</dbReference>
<dbReference type="Gene3D" id="3.30.930.10">
    <property type="entry name" value="Bira Bifunctional Protein, Domain 2"/>
    <property type="match status" value="1"/>
</dbReference>
<dbReference type="Gene3D" id="1.20.58.180">
    <property type="entry name" value="Class II aaRS and biotin synthetases, domain 2"/>
    <property type="match status" value="1"/>
</dbReference>
<dbReference type="HAMAP" id="MF_00254">
    <property type="entry name" value="Gly_tRNA_synth_alpha"/>
    <property type="match status" value="1"/>
</dbReference>
<dbReference type="InterPro" id="IPR045864">
    <property type="entry name" value="aa-tRNA-synth_II/BPL/LPL"/>
</dbReference>
<dbReference type="InterPro" id="IPR006194">
    <property type="entry name" value="Gly-tRNA-synth_heterodimer"/>
</dbReference>
<dbReference type="InterPro" id="IPR002310">
    <property type="entry name" value="Gly-tRNA_ligase_asu"/>
</dbReference>
<dbReference type="NCBIfam" id="TIGR00388">
    <property type="entry name" value="glyQ"/>
    <property type="match status" value="1"/>
</dbReference>
<dbReference type="NCBIfam" id="NF006827">
    <property type="entry name" value="PRK09348.1"/>
    <property type="match status" value="1"/>
</dbReference>
<dbReference type="PANTHER" id="PTHR30075:SF2">
    <property type="entry name" value="GLYCINE--TRNA LIGASE, CHLOROPLASTIC_MITOCHONDRIAL 2"/>
    <property type="match status" value="1"/>
</dbReference>
<dbReference type="PANTHER" id="PTHR30075">
    <property type="entry name" value="GLYCYL-TRNA SYNTHETASE"/>
    <property type="match status" value="1"/>
</dbReference>
<dbReference type="Pfam" id="PF02091">
    <property type="entry name" value="tRNA-synt_2e"/>
    <property type="match status" value="1"/>
</dbReference>
<dbReference type="PRINTS" id="PR01044">
    <property type="entry name" value="TRNASYNTHGA"/>
</dbReference>
<dbReference type="SUPFAM" id="SSF55681">
    <property type="entry name" value="Class II aaRS and biotin synthetases"/>
    <property type="match status" value="1"/>
</dbReference>
<dbReference type="PROSITE" id="PS50861">
    <property type="entry name" value="AA_TRNA_LIGASE_II_GLYAB"/>
    <property type="match status" value="1"/>
</dbReference>
<gene>
    <name type="primary">glyQ</name>
    <name type="ordered locus">TM_0216</name>
</gene>
<organism>
    <name type="scientific">Thermotoga maritima (strain ATCC 43589 / DSM 3109 / JCM 10099 / NBRC 100826 / MSB8)</name>
    <dbReference type="NCBI Taxonomy" id="243274"/>
    <lineage>
        <taxon>Bacteria</taxon>
        <taxon>Thermotogati</taxon>
        <taxon>Thermotogota</taxon>
        <taxon>Thermotogae</taxon>
        <taxon>Thermotogales</taxon>
        <taxon>Thermotogaceae</taxon>
        <taxon>Thermotoga</taxon>
    </lineage>
</organism>